<evidence type="ECO:0000255" key="1"/>
<evidence type="ECO:0000255" key="2">
    <source>
        <dbReference type="PROSITE-ProRule" id="PRU00703"/>
    </source>
</evidence>
<evidence type="ECO:0000255" key="3">
    <source>
        <dbReference type="PROSITE-ProRule" id="PRU00797"/>
    </source>
</evidence>
<evidence type="ECO:0000305" key="4"/>
<sequence>MYVPDVAEDLCLDIFHKQKQVISRYFANFHCDVVRQLTERLLCHQGAVFFSGIGKSGCIARKLVATMQSFGEKAFFLSGDLLHGDLGVVSSGDIVCLFSNSGETREILEWIPHLKNRQVFLVGITSSPCSSLAVFSDFVVMLPKLEELDPFNLIPTTSTTCQLLFSDLLAMTVLRCRKISLSDYGKNHPSGQIGLKANGKVRDYLSPRTEVPFCSPSITVSEALTVLSSYGYGCVCVVNEQFELLGIFTDGDLRRGLSECGGAILECPLEQVMTRKPKVISEDSDVLLGLEMMESGNPVTVLPVVDAQHQRFIVGLLHMHTLARAGLL</sequence>
<protein>
    <recommendedName>
        <fullName>Uncharacterized protein TC_0679</fullName>
    </recommendedName>
</protein>
<comment type="similarity">
    <text evidence="4">Belongs to the SIS family. GutQ/KpsF subfamily.</text>
</comment>
<accession>Q9PJZ7</accession>
<organism>
    <name type="scientific">Chlamydia muridarum (strain MoPn / Nigg)</name>
    <dbReference type="NCBI Taxonomy" id="243161"/>
    <lineage>
        <taxon>Bacteria</taxon>
        <taxon>Pseudomonadati</taxon>
        <taxon>Chlamydiota</taxon>
        <taxon>Chlamydiia</taxon>
        <taxon>Chlamydiales</taxon>
        <taxon>Chlamydiaceae</taxon>
        <taxon>Chlamydia/Chlamydophila group</taxon>
        <taxon>Chlamydia</taxon>
    </lineage>
</organism>
<dbReference type="EMBL" id="AE002160">
    <property type="protein sequence ID" value="AAF39499.1"/>
    <property type="molecule type" value="Genomic_DNA"/>
</dbReference>
<dbReference type="PIR" id="C81677">
    <property type="entry name" value="C81677"/>
</dbReference>
<dbReference type="RefSeq" id="WP_010231203.1">
    <property type="nucleotide sequence ID" value="NZ_CP063055.1"/>
</dbReference>
<dbReference type="SMR" id="Q9PJZ7"/>
<dbReference type="GeneID" id="1246040"/>
<dbReference type="KEGG" id="cmu:TC_0679"/>
<dbReference type="eggNOG" id="COG0517">
    <property type="taxonomic scope" value="Bacteria"/>
</dbReference>
<dbReference type="eggNOG" id="COG0794">
    <property type="taxonomic scope" value="Bacteria"/>
</dbReference>
<dbReference type="HOGENOM" id="CLU_040681_13_2_0"/>
<dbReference type="OrthoDB" id="9762536at2"/>
<dbReference type="Proteomes" id="UP000000800">
    <property type="component" value="Chromosome"/>
</dbReference>
<dbReference type="GO" id="GO:0005524">
    <property type="term" value="F:ATP binding"/>
    <property type="evidence" value="ECO:0007669"/>
    <property type="project" value="UniProtKB-KW"/>
</dbReference>
<dbReference type="GO" id="GO:0016853">
    <property type="term" value="F:isomerase activity"/>
    <property type="evidence" value="ECO:0007669"/>
    <property type="project" value="InterPro"/>
</dbReference>
<dbReference type="GO" id="GO:1901135">
    <property type="term" value="P:carbohydrate derivative metabolic process"/>
    <property type="evidence" value="ECO:0007669"/>
    <property type="project" value="InterPro"/>
</dbReference>
<dbReference type="GO" id="GO:0005975">
    <property type="term" value="P:carbohydrate metabolic process"/>
    <property type="evidence" value="ECO:0007669"/>
    <property type="project" value="InterPro"/>
</dbReference>
<dbReference type="CDD" id="cd04604">
    <property type="entry name" value="CBS_pair_SIS_assoc"/>
    <property type="match status" value="1"/>
</dbReference>
<dbReference type="CDD" id="cd05014">
    <property type="entry name" value="SIS_Kpsf"/>
    <property type="match status" value="1"/>
</dbReference>
<dbReference type="Gene3D" id="3.10.580.10">
    <property type="entry name" value="CBS-domain"/>
    <property type="match status" value="1"/>
</dbReference>
<dbReference type="Gene3D" id="3.40.50.10490">
    <property type="entry name" value="Glucose-6-phosphate isomerase like protein, domain 1"/>
    <property type="match status" value="1"/>
</dbReference>
<dbReference type="InterPro" id="IPR000644">
    <property type="entry name" value="CBS_dom"/>
</dbReference>
<dbReference type="InterPro" id="IPR046342">
    <property type="entry name" value="CBS_dom_sf"/>
</dbReference>
<dbReference type="InterPro" id="IPR004800">
    <property type="entry name" value="KdsD/KpsF-type"/>
</dbReference>
<dbReference type="InterPro" id="IPR001347">
    <property type="entry name" value="SIS_dom"/>
</dbReference>
<dbReference type="InterPro" id="IPR046348">
    <property type="entry name" value="SIS_dom_sf"/>
</dbReference>
<dbReference type="InterPro" id="IPR035474">
    <property type="entry name" value="SIS_Kpsf"/>
</dbReference>
<dbReference type="NCBIfam" id="TIGR00393">
    <property type="entry name" value="kpsF"/>
    <property type="match status" value="1"/>
</dbReference>
<dbReference type="PANTHER" id="PTHR47476">
    <property type="match status" value="1"/>
</dbReference>
<dbReference type="PANTHER" id="PTHR47476:SF2">
    <property type="entry name" value="ARABINOSE 5-PHOSPHATE ISOMERASE-RELATED"/>
    <property type="match status" value="1"/>
</dbReference>
<dbReference type="Pfam" id="PF00571">
    <property type="entry name" value="CBS"/>
    <property type="match status" value="2"/>
</dbReference>
<dbReference type="Pfam" id="PF01380">
    <property type="entry name" value="SIS"/>
    <property type="match status" value="1"/>
</dbReference>
<dbReference type="PIRSF" id="PIRSF004692">
    <property type="entry name" value="KdsD_KpsF"/>
    <property type="match status" value="1"/>
</dbReference>
<dbReference type="SMART" id="SM00116">
    <property type="entry name" value="CBS"/>
    <property type="match status" value="1"/>
</dbReference>
<dbReference type="SUPFAM" id="SSF53697">
    <property type="entry name" value="SIS domain"/>
    <property type="match status" value="1"/>
</dbReference>
<dbReference type="PROSITE" id="PS51371">
    <property type="entry name" value="CBS"/>
    <property type="match status" value="2"/>
</dbReference>
<dbReference type="PROSITE" id="PS51464">
    <property type="entry name" value="SIS"/>
    <property type="match status" value="1"/>
</dbReference>
<reference key="1">
    <citation type="journal article" date="2000" name="Nucleic Acids Res.">
        <title>Genome sequences of Chlamydia trachomatis MoPn and Chlamydia pneumoniae AR39.</title>
        <authorList>
            <person name="Read T.D."/>
            <person name="Brunham R.C."/>
            <person name="Shen C."/>
            <person name="Gill S.R."/>
            <person name="Heidelberg J.F."/>
            <person name="White O."/>
            <person name="Hickey E.K."/>
            <person name="Peterson J.D."/>
            <person name="Utterback T.R."/>
            <person name="Berry K.J."/>
            <person name="Bass S."/>
            <person name="Linher K.D."/>
            <person name="Weidman J.F."/>
            <person name="Khouri H.M."/>
            <person name="Craven B."/>
            <person name="Bowman C."/>
            <person name="Dodson R.J."/>
            <person name="Gwinn M.L."/>
            <person name="Nelson W.C."/>
            <person name="DeBoy R.T."/>
            <person name="Kolonay J.F."/>
            <person name="McClarty G."/>
            <person name="Salzberg S.L."/>
            <person name="Eisen J.A."/>
            <person name="Fraser C.M."/>
        </authorList>
    </citation>
    <scope>NUCLEOTIDE SEQUENCE [LARGE SCALE GENOMIC DNA]</scope>
    <source>
        <strain>MoPn / Nigg</strain>
    </source>
</reference>
<name>Y679_CHLMU</name>
<keyword id="KW-0067">ATP-binding</keyword>
<keyword id="KW-0129">CBS domain</keyword>
<keyword id="KW-0547">Nucleotide-binding</keyword>
<keyword id="KW-0677">Repeat</keyword>
<gene>
    <name type="ordered locus">TC_0679</name>
</gene>
<proteinExistence type="inferred from homology"/>
<feature type="chain" id="PRO_0000136584" description="Uncharacterized protein TC_0679">
    <location>
        <begin position="1"/>
        <end position="328"/>
    </location>
</feature>
<feature type="domain" description="SIS" evidence="3">
    <location>
        <begin position="37"/>
        <end position="179"/>
    </location>
</feature>
<feature type="domain" description="CBS 1" evidence="2">
    <location>
        <begin position="205"/>
        <end position="264"/>
    </location>
</feature>
<feature type="domain" description="CBS 2" evidence="2">
    <location>
        <begin position="273"/>
        <end position="328"/>
    </location>
</feature>
<feature type="binding site" evidence="1">
    <location>
        <begin position="52"/>
        <end position="57"/>
    </location>
    <ligand>
        <name>ATP</name>
        <dbReference type="ChEBI" id="CHEBI:30616"/>
    </ligand>
</feature>